<feature type="peptide" id="PRO_0000361062" description="Brevinin-2Ej" evidence="3">
    <location>
        <begin position="1"/>
        <end position="30"/>
    </location>
</feature>
<feature type="disulfide bond" evidence="3">
    <location>
        <begin position="24"/>
        <end position="30"/>
    </location>
</feature>
<name>BR2EJ_PELRI</name>
<comment type="function">
    <text evidence="1">Shows antibacterial activity against representative Gram-negative and Gram-positive bacterial species, and hemolytic activity.</text>
</comment>
<comment type="subcellular location">
    <subcellularLocation>
        <location evidence="5">Secreted</location>
    </subcellularLocation>
</comment>
<comment type="tissue specificity">
    <text evidence="5">Expressed by the skin glands.</text>
</comment>
<comment type="mass spectrometry"/>
<comment type="similarity">
    <text evidence="2">Belongs to the frog skin active peptide (FSAP) family. Brevinin subfamily.</text>
</comment>
<sequence>GIFLDKLKNFAKGVAQSLLNKASCKLSGQC</sequence>
<organism>
    <name type="scientific">Pelophylax ridibundus</name>
    <name type="common">Marsh frog</name>
    <name type="synonym">Rana ridibunda</name>
    <dbReference type="NCBI Taxonomy" id="8406"/>
    <lineage>
        <taxon>Eukaryota</taxon>
        <taxon>Metazoa</taxon>
        <taxon>Chordata</taxon>
        <taxon>Craniata</taxon>
        <taxon>Vertebrata</taxon>
        <taxon>Euteleostomi</taxon>
        <taxon>Amphibia</taxon>
        <taxon>Batrachia</taxon>
        <taxon>Anura</taxon>
        <taxon>Neobatrachia</taxon>
        <taxon>Ranoidea</taxon>
        <taxon>Ranidae</taxon>
        <taxon>Pelophylax</taxon>
    </lineage>
</organism>
<dbReference type="GO" id="GO:0005576">
    <property type="term" value="C:extracellular region"/>
    <property type="evidence" value="ECO:0000314"/>
    <property type="project" value="UniProtKB"/>
</dbReference>
<dbReference type="GO" id="GO:0042742">
    <property type="term" value="P:defense response to bacterium"/>
    <property type="evidence" value="ECO:0007669"/>
    <property type="project" value="UniProtKB-KW"/>
</dbReference>
<dbReference type="GO" id="GO:0031640">
    <property type="term" value="P:killing of cells of another organism"/>
    <property type="evidence" value="ECO:0007669"/>
    <property type="project" value="UniProtKB-KW"/>
</dbReference>
<dbReference type="InterPro" id="IPR012521">
    <property type="entry name" value="Antimicrobial_frog_2"/>
</dbReference>
<dbReference type="Pfam" id="PF08023">
    <property type="entry name" value="Antimicrobial_2"/>
    <property type="match status" value="1"/>
</dbReference>
<evidence type="ECO:0000250" key="1">
    <source>
        <dbReference type="UniProtKB" id="P40841"/>
    </source>
</evidence>
<evidence type="ECO:0000255" key="2"/>
<evidence type="ECO:0000269" key="3">
    <source>
    </source>
</evidence>
<evidence type="ECO:0000303" key="4">
    <source>
    </source>
</evidence>
<evidence type="ECO:0000305" key="5"/>
<reference evidence="5" key="1">
    <citation type="journal article" date="2008" name="Rapid Commun. Mass Spectrom.">
        <title>De novo sequencing of peptides secreted by the skin glands of the caucasian green frog Rana ridibunda.</title>
        <authorList>
            <person name="Samgina T.Y."/>
            <person name="Artemenko K.A."/>
            <person name="Gorshkov V.A."/>
            <person name="Ogourtsov S.V."/>
            <person name="Zubarev R.A."/>
            <person name="Lebedev A.T."/>
        </authorList>
    </citation>
    <scope>PROTEIN SEQUENCE</scope>
    <scope>MASS SPECTROMETRY</scope>
    <scope>DISULFIDE BOND</scope>
    <source>
        <tissue evidence="3">Skin secretion</tissue>
    </source>
</reference>
<protein>
    <recommendedName>
        <fullName evidence="4">Brevinin-2Ej</fullName>
    </recommendedName>
</protein>
<keyword id="KW-0878">Amphibian defense peptide</keyword>
<keyword id="KW-0044">Antibiotic</keyword>
<keyword id="KW-0929">Antimicrobial</keyword>
<keyword id="KW-0204">Cytolysis</keyword>
<keyword id="KW-0903">Direct protein sequencing</keyword>
<keyword id="KW-1015">Disulfide bond</keyword>
<keyword id="KW-0354">Hemolysis</keyword>
<keyword id="KW-0964">Secreted</keyword>
<accession>P86152</accession>
<proteinExistence type="evidence at protein level"/>